<organism>
    <name type="scientific">Staphylococcus epidermidis (strain ATCC 12228 / FDA PCI 1200)</name>
    <dbReference type="NCBI Taxonomy" id="176280"/>
    <lineage>
        <taxon>Bacteria</taxon>
        <taxon>Bacillati</taxon>
        <taxon>Bacillota</taxon>
        <taxon>Bacilli</taxon>
        <taxon>Bacillales</taxon>
        <taxon>Staphylococcaceae</taxon>
        <taxon>Staphylococcus</taxon>
    </lineage>
</organism>
<dbReference type="EC" id="2.1.1.177" evidence="1"/>
<dbReference type="EMBL" id="AE015929">
    <property type="protein sequence ID" value="AAO03620.1"/>
    <property type="molecule type" value="Genomic_DNA"/>
</dbReference>
<dbReference type="RefSeq" id="NP_763578.1">
    <property type="nucleotide sequence ID" value="NC_004461.1"/>
</dbReference>
<dbReference type="RefSeq" id="WP_002458513.1">
    <property type="nucleotide sequence ID" value="NZ_WBME01000012.1"/>
</dbReference>
<dbReference type="SMR" id="Q8CU83"/>
<dbReference type="GeneID" id="50017439"/>
<dbReference type="KEGG" id="sep:SE_0023"/>
<dbReference type="PATRIC" id="fig|176280.10.peg.23"/>
<dbReference type="eggNOG" id="COG1576">
    <property type="taxonomic scope" value="Bacteria"/>
</dbReference>
<dbReference type="HOGENOM" id="CLU_100552_0_0_9"/>
<dbReference type="OrthoDB" id="9806643at2"/>
<dbReference type="Proteomes" id="UP000001411">
    <property type="component" value="Chromosome"/>
</dbReference>
<dbReference type="GO" id="GO:0005737">
    <property type="term" value="C:cytoplasm"/>
    <property type="evidence" value="ECO:0007669"/>
    <property type="project" value="UniProtKB-SubCell"/>
</dbReference>
<dbReference type="GO" id="GO:0070038">
    <property type="term" value="F:rRNA (pseudouridine-N3-)-methyltransferase activity"/>
    <property type="evidence" value="ECO:0007669"/>
    <property type="project" value="UniProtKB-UniRule"/>
</dbReference>
<dbReference type="CDD" id="cd18081">
    <property type="entry name" value="RlmH-like"/>
    <property type="match status" value="1"/>
</dbReference>
<dbReference type="Gene3D" id="3.40.1280.10">
    <property type="match status" value="1"/>
</dbReference>
<dbReference type="HAMAP" id="MF_00658">
    <property type="entry name" value="23SrRNA_methyltr_H"/>
    <property type="match status" value="1"/>
</dbReference>
<dbReference type="InterPro" id="IPR029028">
    <property type="entry name" value="Alpha/beta_knot_MTases"/>
</dbReference>
<dbReference type="InterPro" id="IPR003742">
    <property type="entry name" value="RlmH-like"/>
</dbReference>
<dbReference type="InterPro" id="IPR029026">
    <property type="entry name" value="tRNA_m1G_MTases_N"/>
</dbReference>
<dbReference type="NCBIfam" id="NF000985">
    <property type="entry name" value="PRK00103.1-3"/>
    <property type="match status" value="1"/>
</dbReference>
<dbReference type="NCBIfam" id="NF000986">
    <property type="entry name" value="PRK00103.1-4"/>
    <property type="match status" value="1"/>
</dbReference>
<dbReference type="NCBIfam" id="TIGR00246">
    <property type="entry name" value="tRNA_RlmH_YbeA"/>
    <property type="match status" value="1"/>
</dbReference>
<dbReference type="PANTHER" id="PTHR33603">
    <property type="entry name" value="METHYLTRANSFERASE"/>
    <property type="match status" value="1"/>
</dbReference>
<dbReference type="PANTHER" id="PTHR33603:SF1">
    <property type="entry name" value="RIBOSOMAL RNA LARGE SUBUNIT METHYLTRANSFERASE H"/>
    <property type="match status" value="1"/>
</dbReference>
<dbReference type="Pfam" id="PF02590">
    <property type="entry name" value="SPOUT_MTase"/>
    <property type="match status" value="1"/>
</dbReference>
<dbReference type="PIRSF" id="PIRSF004505">
    <property type="entry name" value="MT_bac"/>
    <property type="match status" value="1"/>
</dbReference>
<dbReference type="SUPFAM" id="SSF75217">
    <property type="entry name" value="alpha/beta knot"/>
    <property type="match status" value="1"/>
</dbReference>
<keyword id="KW-0963">Cytoplasm</keyword>
<keyword id="KW-0489">Methyltransferase</keyword>
<keyword id="KW-0698">rRNA processing</keyword>
<keyword id="KW-0949">S-adenosyl-L-methionine</keyword>
<keyword id="KW-0808">Transferase</keyword>
<comment type="function">
    <text evidence="1">Specifically methylates the pseudouridine at position 1915 (m3Psi1915) in 23S rRNA.</text>
</comment>
<comment type="catalytic activity">
    <reaction evidence="1">
        <text>pseudouridine(1915) in 23S rRNA + S-adenosyl-L-methionine = N(3)-methylpseudouridine(1915) in 23S rRNA + S-adenosyl-L-homocysteine + H(+)</text>
        <dbReference type="Rhea" id="RHEA:42752"/>
        <dbReference type="Rhea" id="RHEA-COMP:10221"/>
        <dbReference type="Rhea" id="RHEA-COMP:10222"/>
        <dbReference type="ChEBI" id="CHEBI:15378"/>
        <dbReference type="ChEBI" id="CHEBI:57856"/>
        <dbReference type="ChEBI" id="CHEBI:59789"/>
        <dbReference type="ChEBI" id="CHEBI:65314"/>
        <dbReference type="ChEBI" id="CHEBI:74486"/>
        <dbReference type="EC" id="2.1.1.177"/>
    </reaction>
</comment>
<comment type="subunit">
    <text evidence="1">Homodimer.</text>
</comment>
<comment type="subcellular location">
    <subcellularLocation>
        <location evidence="1">Cytoplasm</location>
    </subcellularLocation>
</comment>
<comment type="similarity">
    <text evidence="1">Belongs to the RNA methyltransferase RlmH family.</text>
</comment>
<evidence type="ECO:0000255" key="1">
    <source>
        <dbReference type="HAMAP-Rule" id="MF_00658"/>
    </source>
</evidence>
<proteinExistence type="inferred from homology"/>
<name>RLMH_STAES</name>
<reference key="1">
    <citation type="journal article" date="2003" name="Mol. Microbiol.">
        <title>Genome-based analysis of virulence genes in a non-biofilm-forming Staphylococcus epidermidis strain (ATCC 12228).</title>
        <authorList>
            <person name="Zhang Y.-Q."/>
            <person name="Ren S.-X."/>
            <person name="Li H.-L."/>
            <person name="Wang Y.-X."/>
            <person name="Fu G."/>
            <person name="Yang J."/>
            <person name="Qin Z.-Q."/>
            <person name="Miao Y.-G."/>
            <person name="Wang W.-Y."/>
            <person name="Chen R.-S."/>
            <person name="Shen Y."/>
            <person name="Chen Z."/>
            <person name="Yuan Z.-H."/>
            <person name="Zhao G.-P."/>
            <person name="Qu D."/>
            <person name="Danchin A."/>
            <person name="Wen Y.-M."/>
        </authorList>
    </citation>
    <scope>NUCLEOTIDE SEQUENCE [LARGE SCALE GENOMIC DNA]</scope>
    <source>
        <strain>ATCC 12228 / FDA PCI 1200</strain>
    </source>
</reference>
<protein>
    <recommendedName>
        <fullName evidence="1">Ribosomal RNA large subunit methyltransferase H</fullName>
        <ecNumber evidence="1">2.1.1.177</ecNumber>
    </recommendedName>
    <alternativeName>
        <fullName evidence="1">23S rRNA (pseudouridine1915-N3)-methyltransferase</fullName>
    </alternativeName>
    <alternativeName>
        <fullName evidence="1">23S rRNA m3Psi1915 methyltransferase</fullName>
    </alternativeName>
    <alternativeName>
        <fullName evidence="1">rRNA (pseudouridine-N3-)-methyltransferase RlmH</fullName>
    </alternativeName>
</protein>
<sequence length="159" mass="18382">MKITILSVGKLKEKYWKQAIAEYEKRLGPYTKIELIEVPDEKAPENMSDKEIEQVKEKEGQRLLNKIKPQSTVITLEIKGKMLSSEGLAKELQTRMTQGQSDFTFVIGGSNGLHQDVLQRSNYALSFSNMTFPHQMMRVILIEQIYRAFKIMRGEAYHK</sequence>
<feature type="chain" id="PRO_0000198183" description="Ribosomal RNA large subunit methyltransferase H">
    <location>
        <begin position="1"/>
        <end position="159"/>
    </location>
</feature>
<feature type="binding site" evidence="1">
    <location>
        <position position="76"/>
    </location>
    <ligand>
        <name>S-adenosyl-L-methionine</name>
        <dbReference type="ChEBI" id="CHEBI:59789"/>
    </ligand>
</feature>
<feature type="binding site" evidence="1">
    <location>
        <position position="108"/>
    </location>
    <ligand>
        <name>S-adenosyl-L-methionine</name>
        <dbReference type="ChEBI" id="CHEBI:59789"/>
    </ligand>
</feature>
<feature type="binding site" evidence="1">
    <location>
        <begin position="127"/>
        <end position="132"/>
    </location>
    <ligand>
        <name>S-adenosyl-L-methionine</name>
        <dbReference type="ChEBI" id="CHEBI:59789"/>
    </ligand>
</feature>
<accession>Q8CU83</accession>
<gene>
    <name evidence="1" type="primary">rlmH</name>
    <name type="ordered locus">SE_0023</name>
</gene>